<dbReference type="EC" id="7.1.2.2" evidence="1"/>
<dbReference type="EMBL" id="AJ965256">
    <property type="protein sequence ID" value="CAI82726.1"/>
    <property type="molecule type" value="Genomic_DNA"/>
</dbReference>
<dbReference type="RefSeq" id="WP_011309078.1">
    <property type="nucleotide sequence ID" value="NC_007356.1"/>
</dbReference>
<dbReference type="SMR" id="Q3ZZT7"/>
<dbReference type="KEGG" id="deh:cbdbA538"/>
<dbReference type="HOGENOM" id="CLU_022398_0_2_0"/>
<dbReference type="Proteomes" id="UP000000433">
    <property type="component" value="Chromosome"/>
</dbReference>
<dbReference type="GO" id="GO:0005886">
    <property type="term" value="C:plasma membrane"/>
    <property type="evidence" value="ECO:0007669"/>
    <property type="project" value="UniProtKB-SubCell"/>
</dbReference>
<dbReference type="GO" id="GO:0045259">
    <property type="term" value="C:proton-transporting ATP synthase complex"/>
    <property type="evidence" value="ECO:0007669"/>
    <property type="project" value="UniProtKB-KW"/>
</dbReference>
<dbReference type="GO" id="GO:0005524">
    <property type="term" value="F:ATP binding"/>
    <property type="evidence" value="ECO:0007669"/>
    <property type="project" value="UniProtKB-UniRule"/>
</dbReference>
<dbReference type="GO" id="GO:0016887">
    <property type="term" value="F:ATP hydrolysis activity"/>
    <property type="evidence" value="ECO:0007669"/>
    <property type="project" value="InterPro"/>
</dbReference>
<dbReference type="GO" id="GO:0046933">
    <property type="term" value="F:proton-transporting ATP synthase activity, rotational mechanism"/>
    <property type="evidence" value="ECO:0007669"/>
    <property type="project" value="UniProtKB-UniRule"/>
</dbReference>
<dbReference type="CDD" id="cd18110">
    <property type="entry name" value="ATP-synt_F1_beta_C"/>
    <property type="match status" value="1"/>
</dbReference>
<dbReference type="CDD" id="cd18115">
    <property type="entry name" value="ATP-synt_F1_beta_N"/>
    <property type="match status" value="1"/>
</dbReference>
<dbReference type="CDD" id="cd01133">
    <property type="entry name" value="F1-ATPase_beta_CD"/>
    <property type="match status" value="1"/>
</dbReference>
<dbReference type="FunFam" id="1.10.1140.10:FF:000001">
    <property type="entry name" value="ATP synthase subunit beta"/>
    <property type="match status" value="1"/>
</dbReference>
<dbReference type="FunFam" id="3.40.50.300:FF:001630">
    <property type="entry name" value="ATP synthase subunit beta"/>
    <property type="match status" value="1"/>
</dbReference>
<dbReference type="Gene3D" id="2.40.10.170">
    <property type="match status" value="1"/>
</dbReference>
<dbReference type="Gene3D" id="1.10.1140.10">
    <property type="entry name" value="Bovine Mitochondrial F1-atpase, Atp Synthase Beta Chain, Chain D, domain 3"/>
    <property type="match status" value="1"/>
</dbReference>
<dbReference type="Gene3D" id="3.40.50.300">
    <property type="entry name" value="P-loop containing nucleotide triphosphate hydrolases"/>
    <property type="match status" value="1"/>
</dbReference>
<dbReference type="HAMAP" id="MF_01347">
    <property type="entry name" value="ATP_synth_beta_bact"/>
    <property type="match status" value="1"/>
</dbReference>
<dbReference type="InterPro" id="IPR003593">
    <property type="entry name" value="AAA+_ATPase"/>
</dbReference>
<dbReference type="InterPro" id="IPR055190">
    <property type="entry name" value="ATP-synt_VA_C"/>
</dbReference>
<dbReference type="InterPro" id="IPR005722">
    <property type="entry name" value="ATP_synth_F1_bsu"/>
</dbReference>
<dbReference type="InterPro" id="IPR020003">
    <property type="entry name" value="ATPase_a/bsu_AS"/>
</dbReference>
<dbReference type="InterPro" id="IPR050053">
    <property type="entry name" value="ATPase_alpha/beta_chains"/>
</dbReference>
<dbReference type="InterPro" id="IPR004100">
    <property type="entry name" value="ATPase_F1/V1/A1_a/bsu_N"/>
</dbReference>
<dbReference type="InterPro" id="IPR036121">
    <property type="entry name" value="ATPase_F1/V1/A1_a/bsu_N_sf"/>
</dbReference>
<dbReference type="InterPro" id="IPR000194">
    <property type="entry name" value="ATPase_F1/V1/A1_a/bsu_nucl-bd"/>
</dbReference>
<dbReference type="InterPro" id="IPR024034">
    <property type="entry name" value="ATPase_F1/V1_b/a_C"/>
</dbReference>
<dbReference type="InterPro" id="IPR027417">
    <property type="entry name" value="P-loop_NTPase"/>
</dbReference>
<dbReference type="NCBIfam" id="TIGR01039">
    <property type="entry name" value="atpD"/>
    <property type="match status" value="1"/>
</dbReference>
<dbReference type="PANTHER" id="PTHR15184">
    <property type="entry name" value="ATP SYNTHASE"/>
    <property type="match status" value="1"/>
</dbReference>
<dbReference type="PANTHER" id="PTHR15184:SF71">
    <property type="entry name" value="ATP SYNTHASE SUBUNIT BETA, MITOCHONDRIAL"/>
    <property type="match status" value="1"/>
</dbReference>
<dbReference type="Pfam" id="PF00006">
    <property type="entry name" value="ATP-synt_ab"/>
    <property type="match status" value="1"/>
</dbReference>
<dbReference type="Pfam" id="PF02874">
    <property type="entry name" value="ATP-synt_ab_N"/>
    <property type="match status" value="1"/>
</dbReference>
<dbReference type="Pfam" id="PF22919">
    <property type="entry name" value="ATP-synt_VA_C"/>
    <property type="match status" value="1"/>
</dbReference>
<dbReference type="SMART" id="SM00382">
    <property type="entry name" value="AAA"/>
    <property type="match status" value="1"/>
</dbReference>
<dbReference type="SUPFAM" id="SSF47917">
    <property type="entry name" value="C-terminal domain of alpha and beta subunits of F1 ATP synthase"/>
    <property type="match status" value="1"/>
</dbReference>
<dbReference type="SUPFAM" id="SSF50615">
    <property type="entry name" value="N-terminal domain of alpha and beta subunits of F1 ATP synthase"/>
    <property type="match status" value="1"/>
</dbReference>
<dbReference type="SUPFAM" id="SSF52540">
    <property type="entry name" value="P-loop containing nucleoside triphosphate hydrolases"/>
    <property type="match status" value="1"/>
</dbReference>
<dbReference type="PROSITE" id="PS00152">
    <property type="entry name" value="ATPASE_ALPHA_BETA"/>
    <property type="match status" value="1"/>
</dbReference>
<organism>
    <name type="scientific">Dehalococcoides mccartyi (strain CBDB1)</name>
    <dbReference type="NCBI Taxonomy" id="255470"/>
    <lineage>
        <taxon>Bacteria</taxon>
        <taxon>Bacillati</taxon>
        <taxon>Chloroflexota</taxon>
        <taxon>Dehalococcoidia</taxon>
        <taxon>Dehalococcoidales</taxon>
        <taxon>Dehalococcoidaceae</taxon>
        <taxon>Dehalococcoides</taxon>
    </lineage>
</organism>
<sequence>MANGKVIQVIGSVVDVEFSADSMPALFNALEIPRENGKMVLEVQSHVGNNRVKCLSFTPTDGLERGAEVIDTTRPLSVPVGRGTLGRIFNVLGEALDNRGDVKSEKTMPIHRLAPGMDELESSAQVLETGIKVIDLIAPFARGGKIGALGGAGVGKTVLIQELIRNIATEHEGFSVFAGVGERSREGNDLWHEMEDSGVLPKTTMVFGQMNELPAVRLRIALTGLTMAEYFRDEERQDVLLFIDNIYRYTLAGMEVSALLGRMPSAVGYQPTLATEMGALQERIASTKQGSITSFQAVYVPADDYTDPGVVATFGHLDAMIALERSLAEQALYPAVDPLASNSRILDPQVVGEEHYKVARDVQKVLQRYKDLQDVIAILGMEELSEEDKLTVARARRIQRFLTQPMFVSEVFTGRPGQYVSLTETIRGFKEILEGKHDSLPEQAFYMVGTIDDAVAEAKKLSAV</sequence>
<reference key="1">
    <citation type="journal article" date="2005" name="Nat. Biotechnol.">
        <title>Genome sequence of the chlorinated compound-respiring bacterium Dehalococcoides species strain CBDB1.</title>
        <authorList>
            <person name="Kube M."/>
            <person name="Beck A."/>
            <person name="Zinder S.H."/>
            <person name="Kuhl H."/>
            <person name="Reinhardt R."/>
            <person name="Adrian L."/>
        </authorList>
    </citation>
    <scope>NUCLEOTIDE SEQUENCE [LARGE SCALE GENOMIC DNA]</scope>
    <source>
        <strain>CBDB1</strain>
    </source>
</reference>
<keyword id="KW-0066">ATP synthesis</keyword>
<keyword id="KW-0067">ATP-binding</keyword>
<keyword id="KW-1003">Cell membrane</keyword>
<keyword id="KW-0139">CF(1)</keyword>
<keyword id="KW-0375">Hydrogen ion transport</keyword>
<keyword id="KW-0406">Ion transport</keyword>
<keyword id="KW-0472">Membrane</keyword>
<keyword id="KW-0547">Nucleotide-binding</keyword>
<keyword id="KW-1278">Translocase</keyword>
<keyword id="KW-0813">Transport</keyword>
<protein>
    <recommendedName>
        <fullName evidence="1">ATP synthase subunit beta</fullName>
        <ecNumber evidence="1">7.1.2.2</ecNumber>
    </recommendedName>
    <alternativeName>
        <fullName evidence="1">ATP synthase F1 sector subunit beta</fullName>
    </alternativeName>
    <alternativeName>
        <fullName evidence="1">F-ATPase subunit beta</fullName>
    </alternativeName>
</protein>
<proteinExistence type="inferred from homology"/>
<evidence type="ECO:0000255" key="1">
    <source>
        <dbReference type="HAMAP-Rule" id="MF_01347"/>
    </source>
</evidence>
<accession>Q3ZZT7</accession>
<comment type="function">
    <text evidence="1">Produces ATP from ADP in the presence of a proton gradient across the membrane. The catalytic sites are hosted primarily by the beta subunits.</text>
</comment>
<comment type="catalytic activity">
    <reaction evidence="1">
        <text>ATP + H2O + 4 H(+)(in) = ADP + phosphate + 5 H(+)(out)</text>
        <dbReference type="Rhea" id="RHEA:57720"/>
        <dbReference type="ChEBI" id="CHEBI:15377"/>
        <dbReference type="ChEBI" id="CHEBI:15378"/>
        <dbReference type="ChEBI" id="CHEBI:30616"/>
        <dbReference type="ChEBI" id="CHEBI:43474"/>
        <dbReference type="ChEBI" id="CHEBI:456216"/>
        <dbReference type="EC" id="7.1.2.2"/>
    </reaction>
</comment>
<comment type="subunit">
    <text evidence="1">F-type ATPases have 2 components, CF(1) - the catalytic core - and CF(0) - the membrane proton channel. CF(1) has five subunits: alpha(3), beta(3), gamma(1), delta(1), epsilon(1). CF(0) has three main subunits: a(1), b(2) and c(9-12). The alpha and beta chains form an alternating ring which encloses part of the gamma chain. CF(1) is attached to CF(0) by a central stalk formed by the gamma and epsilon chains, while a peripheral stalk is formed by the delta and b chains.</text>
</comment>
<comment type="subcellular location">
    <subcellularLocation>
        <location evidence="1">Cell membrane</location>
        <topology evidence="1">Peripheral membrane protein</topology>
    </subcellularLocation>
</comment>
<comment type="similarity">
    <text evidence="1">Belongs to the ATPase alpha/beta chains family.</text>
</comment>
<feature type="chain" id="PRO_0000254250" description="ATP synthase subunit beta">
    <location>
        <begin position="1"/>
        <end position="464"/>
    </location>
</feature>
<feature type="binding site" evidence="1">
    <location>
        <begin position="150"/>
        <end position="157"/>
    </location>
    <ligand>
        <name>ATP</name>
        <dbReference type="ChEBI" id="CHEBI:30616"/>
    </ligand>
</feature>
<gene>
    <name evidence="1" type="primary">atpD</name>
    <name type="ordered locus">cbdbA538</name>
</gene>
<name>ATPB_DEHMC</name>